<organism>
    <name type="scientific">Danio rerio</name>
    <name type="common">Zebrafish</name>
    <name type="synonym">Brachydanio rerio</name>
    <dbReference type="NCBI Taxonomy" id="7955"/>
    <lineage>
        <taxon>Eukaryota</taxon>
        <taxon>Metazoa</taxon>
        <taxon>Chordata</taxon>
        <taxon>Craniata</taxon>
        <taxon>Vertebrata</taxon>
        <taxon>Euteleostomi</taxon>
        <taxon>Actinopterygii</taxon>
        <taxon>Neopterygii</taxon>
        <taxon>Teleostei</taxon>
        <taxon>Ostariophysi</taxon>
        <taxon>Cypriniformes</taxon>
        <taxon>Danionidae</taxon>
        <taxon>Danioninae</taxon>
        <taxon>Danio</taxon>
    </lineage>
</organism>
<protein>
    <recommendedName>
        <fullName evidence="3">Adenylosuccinate synthetase isozyme 2</fullName>
        <shortName evidence="3">AMPSase 2</shortName>
        <shortName evidence="3">AdSS 2</shortName>
        <ecNumber evidence="3">6.3.4.4</ecNumber>
    </recommendedName>
    <alternativeName>
        <fullName evidence="3">Adenylosuccinate synthetase, acidic isozyme</fullName>
    </alternativeName>
    <alternativeName>
        <fullName evidence="3">Adenylosuccinate synthetase, liver isozyme</fullName>
        <shortName evidence="3">L-type adenylosuccinate synthetase</shortName>
    </alternativeName>
    <alternativeName>
        <fullName evidence="3">IMP--aspartate ligase 2</fullName>
    </alternativeName>
</protein>
<feature type="chain" id="PRO_0000398884" description="Adenylosuccinate synthetase isozyme 2">
    <location>
        <begin position="1"/>
        <end position="455"/>
    </location>
</feature>
<feature type="region of interest" description="Disordered" evidence="4">
    <location>
        <begin position="1"/>
        <end position="25"/>
    </location>
</feature>
<feature type="compositionally biased region" description="Low complexity" evidence="4">
    <location>
        <begin position="12"/>
        <end position="25"/>
    </location>
</feature>
<feature type="active site" description="Proton acceptor" evidence="3">
    <location>
        <position position="39"/>
    </location>
</feature>
<feature type="active site" description="Proton donor" evidence="3">
    <location>
        <position position="67"/>
    </location>
</feature>
<feature type="binding site" evidence="3">
    <location>
        <begin position="38"/>
        <end position="44"/>
    </location>
    <ligand>
        <name>GTP</name>
        <dbReference type="ChEBI" id="CHEBI:37565"/>
    </ligand>
</feature>
<feature type="binding site" description="in other chain" evidence="3">
    <location>
        <begin position="39"/>
        <end position="42"/>
    </location>
    <ligand>
        <name>IMP</name>
        <dbReference type="ChEBI" id="CHEBI:58053"/>
        <note>ligand shared between dimeric partners</note>
    </ligand>
</feature>
<feature type="binding site" evidence="3">
    <location>
        <position position="39"/>
    </location>
    <ligand>
        <name>Mg(2+)</name>
        <dbReference type="ChEBI" id="CHEBI:18420"/>
    </ligand>
</feature>
<feature type="binding site" evidence="3">
    <location>
        <position position="39"/>
    </location>
    <ligand>
        <name>substrate</name>
    </ligand>
</feature>
<feature type="binding site" description="in other chain" evidence="3">
    <location>
        <begin position="64"/>
        <end position="67"/>
    </location>
    <ligand>
        <name>IMP</name>
        <dbReference type="ChEBI" id="CHEBI:58053"/>
        <note>ligand shared between dimeric partners</note>
    </ligand>
</feature>
<feature type="binding site" evidence="3">
    <location>
        <begin position="66"/>
        <end position="68"/>
    </location>
    <ligand>
        <name>GTP</name>
        <dbReference type="ChEBI" id="CHEBI:37565"/>
    </ligand>
</feature>
<feature type="binding site" evidence="3">
    <location>
        <position position="66"/>
    </location>
    <ligand>
        <name>Mg(2+)</name>
        <dbReference type="ChEBI" id="CHEBI:18420"/>
    </ligand>
</feature>
<feature type="binding site" description="in other chain" evidence="3">
    <location>
        <position position="161"/>
    </location>
    <ligand>
        <name>IMP</name>
        <dbReference type="ChEBI" id="CHEBI:58053"/>
        <note>ligand shared between dimeric partners</note>
    </ligand>
</feature>
<feature type="binding site" evidence="3">
    <location>
        <position position="175"/>
    </location>
    <ligand>
        <name>IMP</name>
        <dbReference type="ChEBI" id="CHEBI:58053"/>
        <note>ligand shared between dimeric partners</note>
    </ligand>
</feature>
<feature type="binding site" description="in other chain" evidence="3">
    <location>
        <position position="254"/>
    </location>
    <ligand>
        <name>IMP</name>
        <dbReference type="ChEBI" id="CHEBI:58053"/>
        <note>ligand shared between dimeric partners</note>
    </ligand>
</feature>
<feature type="binding site" description="in other chain" evidence="3">
    <location>
        <position position="269"/>
    </location>
    <ligand>
        <name>IMP</name>
        <dbReference type="ChEBI" id="CHEBI:58053"/>
        <note>ligand shared between dimeric partners</note>
    </ligand>
</feature>
<feature type="binding site" evidence="3">
    <location>
        <begin position="329"/>
        <end position="335"/>
    </location>
    <ligand>
        <name>substrate</name>
    </ligand>
</feature>
<feature type="binding site" description="in other chain" evidence="3">
    <location>
        <position position="333"/>
    </location>
    <ligand>
        <name>IMP</name>
        <dbReference type="ChEBI" id="CHEBI:58053"/>
        <note>ligand shared between dimeric partners</note>
    </ligand>
</feature>
<feature type="binding site" evidence="3">
    <location>
        <position position="335"/>
    </location>
    <ligand>
        <name>GTP</name>
        <dbReference type="ChEBI" id="CHEBI:37565"/>
    </ligand>
</feature>
<feature type="binding site" evidence="3">
    <location>
        <begin position="361"/>
        <end position="363"/>
    </location>
    <ligand>
        <name>GTP</name>
        <dbReference type="ChEBI" id="CHEBI:37565"/>
    </ligand>
</feature>
<feature type="binding site" evidence="3">
    <location>
        <begin position="443"/>
        <end position="446"/>
    </location>
    <ligand>
        <name>GTP</name>
        <dbReference type="ChEBI" id="CHEBI:37565"/>
    </ligand>
</feature>
<comment type="function">
    <text evidence="2">Plays an important role in the de novo pathway and in the salvage pathway of purine nucleotide biosynthesis. Catalyzes the first committed step in the biosynthesis of AMP from IMP.</text>
</comment>
<comment type="catalytic activity">
    <reaction evidence="3">
        <text>IMP + L-aspartate + GTP = N(6)-(1,2-dicarboxyethyl)-AMP + GDP + phosphate + 2 H(+)</text>
        <dbReference type="Rhea" id="RHEA:15753"/>
        <dbReference type="ChEBI" id="CHEBI:15378"/>
        <dbReference type="ChEBI" id="CHEBI:29991"/>
        <dbReference type="ChEBI" id="CHEBI:37565"/>
        <dbReference type="ChEBI" id="CHEBI:43474"/>
        <dbReference type="ChEBI" id="CHEBI:57567"/>
        <dbReference type="ChEBI" id="CHEBI:58053"/>
        <dbReference type="ChEBI" id="CHEBI:58189"/>
        <dbReference type="EC" id="6.3.4.4"/>
    </reaction>
</comment>
<comment type="cofactor">
    <cofactor evidence="3">
        <name>Mg(2+)</name>
        <dbReference type="ChEBI" id="CHEBI:18420"/>
    </cofactor>
    <text evidence="3">Binds 1 Mg(2+) ion per subunit.</text>
</comment>
<comment type="activity regulation">
    <text evidence="2">Inhibited competitively by AMP and IMP and non-competitively by fructose 1,6-bisphosphate.</text>
</comment>
<comment type="pathway">
    <text evidence="3">Purine metabolism; AMP biosynthesis via de novo pathway; AMP from IMP: step 1/2.</text>
</comment>
<comment type="subunit">
    <text evidence="3">Homodimer.</text>
</comment>
<comment type="subcellular location">
    <subcellularLocation>
        <location evidence="3">Cytoplasm</location>
    </subcellularLocation>
    <subcellularLocation>
        <location evidence="1">Mitochondrion</location>
    </subcellularLocation>
</comment>
<comment type="similarity">
    <text evidence="3">Belongs to the adenylosuccinate synthetase family.</text>
</comment>
<keyword id="KW-0963">Cytoplasm</keyword>
<keyword id="KW-0342">GTP-binding</keyword>
<keyword id="KW-0436">Ligase</keyword>
<keyword id="KW-0460">Magnesium</keyword>
<keyword id="KW-0479">Metal-binding</keyword>
<keyword id="KW-0496">Mitochondrion</keyword>
<keyword id="KW-0547">Nucleotide-binding</keyword>
<keyword id="KW-0658">Purine biosynthesis</keyword>
<keyword id="KW-1185">Reference proteome</keyword>
<proteinExistence type="evidence at transcript level"/>
<name>PURA2_DANRE</name>
<dbReference type="EC" id="6.3.4.4" evidence="3"/>
<dbReference type="EMBL" id="BC092877">
    <property type="protein sequence ID" value="AAH92877.1"/>
    <property type="molecule type" value="mRNA"/>
</dbReference>
<dbReference type="RefSeq" id="NP_001017804.1">
    <property type="nucleotide sequence ID" value="NM_001017804.1"/>
</dbReference>
<dbReference type="SMR" id="Q568F6"/>
<dbReference type="FunCoup" id="Q568F6">
    <property type="interactions" value="1945"/>
</dbReference>
<dbReference type="STRING" id="7955.ENSDARP00000028137"/>
<dbReference type="PaxDb" id="7955-ENSDARP00000028137"/>
<dbReference type="Ensembl" id="ENSDART00000018155">
    <property type="protein sequence ID" value="ENSDARP00000028137"/>
    <property type="gene ID" value="ENSDARG00000002071"/>
</dbReference>
<dbReference type="GeneID" id="550502"/>
<dbReference type="KEGG" id="dre:550502"/>
<dbReference type="AGR" id="ZFIN:ZDB-GENE-050417-337"/>
<dbReference type="CTD" id="159"/>
<dbReference type="ZFIN" id="ZDB-GENE-050417-337">
    <property type="gene designation" value="adss2"/>
</dbReference>
<dbReference type="eggNOG" id="KOG1355">
    <property type="taxonomic scope" value="Eukaryota"/>
</dbReference>
<dbReference type="HOGENOM" id="CLU_029848_3_0_1"/>
<dbReference type="InParanoid" id="Q568F6"/>
<dbReference type="OMA" id="FHHAKPI"/>
<dbReference type="OrthoDB" id="10265645at2759"/>
<dbReference type="PhylomeDB" id="Q568F6"/>
<dbReference type="TreeFam" id="TF300486"/>
<dbReference type="Reactome" id="R-DRE-73817">
    <property type="pathway name" value="Purine ribonucleoside monophosphate biosynthesis"/>
</dbReference>
<dbReference type="UniPathway" id="UPA00075">
    <property type="reaction ID" value="UER00335"/>
</dbReference>
<dbReference type="PRO" id="PR:Q568F6"/>
<dbReference type="Proteomes" id="UP000000437">
    <property type="component" value="Chromosome 13"/>
</dbReference>
<dbReference type="Bgee" id="ENSDARG00000002071">
    <property type="expression patterns" value="Expressed in muscle tissue and 19 other cell types or tissues"/>
</dbReference>
<dbReference type="GO" id="GO:0005737">
    <property type="term" value="C:cytoplasm"/>
    <property type="evidence" value="ECO:0000318"/>
    <property type="project" value="GO_Central"/>
</dbReference>
<dbReference type="GO" id="GO:0005739">
    <property type="term" value="C:mitochondrion"/>
    <property type="evidence" value="ECO:0000250"/>
    <property type="project" value="UniProtKB"/>
</dbReference>
<dbReference type="GO" id="GO:0004019">
    <property type="term" value="F:adenylosuccinate synthase activity"/>
    <property type="evidence" value="ECO:0000318"/>
    <property type="project" value="GO_Central"/>
</dbReference>
<dbReference type="GO" id="GO:0005525">
    <property type="term" value="F:GTP binding"/>
    <property type="evidence" value="ECO:0007669"/>
    <property type="project" value="UniProtKB-UniRule"/>
</dbReference>
<dbReference type="GO" id="GO:0000287">
    <property type="term" value="F:magnesium ion binding"/>
    <property type="evidence" value="ECO:0007669"/>
    <property type="project" value="UniProtKB-UniRule"/>
</dbReference>
<dbReference type="GO" id="GO:0044208">
    <property type="term" value="P:'de novo' AMP biosynthetic process"/>
    <property type="evidence" value="ECO:0000318"/>
    <property type="project" value="GO_Central"/>
</dbReference>
<dbReference type="GO" id="GO:0046040">
    <property type="term" value="P:IMP metabolic process"/>
    <property type="evidence" value="ECO:0000318"/>
    <property type="project" value="GO_Central"/>
</dbReference>
<dbReference type="CDD" id="cd03108">
    <property type="entry name" value="AdSS"/>
    <property type="match status" value="1"/>
</dbReference>
<dbReference type="FunFam" id="3.90.170.10:FF:000001">
    <property type="entry name" value="Adenylosuccinate synthetase"/>
    <property type="match status" value="1"/>
</dbReference>
<dbReference type="FunFam" id="1.10.300.10:FF:000002">
    <property type="entry name" value="Adenylosuccinate synthetase, chloroplastic"/>
    <property type="match status" value="1"/>
</dbReference>
<dbReference type="Gene3D" id="3.40.440.10">
    <property type="entry name" value="Adenylosuccinate Synthetase, subunit A, domain 1"/>
    <property type="match status" value="1"/>
</dbReference>
<dbReference type="Gene3D" id="1.10.300.10">
    <property type="entry name" value="Adenylosuccinate Synthetase, subunit A, domain 2"/>
    <property type="match status" value="1"/>
</dbReference>
<dbReference type="Gene3D" id="3.90.170.10">
    <property type="entry name" value="Adenylosuccinate Synthetase, subunit A, domain 3"/>
    <property type="match status" value="1"/>
</dbReference>
<dbReference type="HAMAP" id="MF_00011">
    <property type="entry name" value="Adenylosucc_synth"/>
    <property type="match status" value="1"/>
</dbReference>
<dbReference type="HAMAP" id="MF_03127">
    <property type="entry name" value="Adenylosucc_synth_vert_acid"/>
    <property type="match status" value="1"/>
</dbReference>
<dbReference type="InterPro" id="IPR018220">
    <property type="entry name" value="Adenylosuccin_syn_GTP-bd"/>
</dbReference>
<dbReference type="InterPro" id="IPR033128">
    <property type="entry name" value="Adenylosuccin_syn_Lys_AS"/>
</dbReference>
<dbReference type="InterPro" id="IPR042109">
    <property type="entry name" value="Adenylosuccinate_synth_dom1"/>
</dbReference>
<dbReference type="InterPro" id="IPR042110">
    <property type="entry name" value="Adenylosuccinate_synth_dom2"/>
</dbReference>
<dbReference type="InterPro" id="IPR042111">
    <property type="entry name" value="Adenylosuccinate_synth_dom3"/>
</dbReference>
<dbReference type="InterPro" id="IPR001114">
    <property type="entry name" value="Adenylosuccinate_synthetase"/>
</dbReference>
<dbReference type="InterPro" id="IPR027529">
    <property type="entry name" value="AdSS_2_vert"/>
</dbReference>
<dbReference type="InterPro" id="IPR027417">
    <property type="entry name" value="P-loop_NTPase"/>
</dbReference>
<dbReference type="NCBIfam" id="NF002223">
    <property type="entry name" value="PRK01117.1"/>
    <property type="match status" value="1"/>
</dbReference>
<dbReference type="NCBIfam" id="TIGR00184">
    <property type="entry name" value="purA"/>
    <property type="match status" value="1"/>
</dbReference>
<dbReference type="PANTHER" id="PTHR11846">
    <property type="entry name" value="ADENYLOSUCCINATE SYNTHETASE"/>
    <property type="match status" value="1"/>
</dbReference>
<dbReference type="PANTHER" id="PTHR11846:SF13">
    <property type="entry name" value="ADENYLOSUCCINATE SYNTHETASE ISOZYME 2"/>
    <property type="match status" value="1"/>
</dbReference>
<dbReference type="Pfam" id="PF00709">
    <property type="entry name" value="Adenylsucc_synt"/>
    <property type="match status" value="1"/>
</dbReference>
<dbReference type="SMART" id="SM00788">
    <property type="entry name" value="Adenylsucc_synt"/>
    <property type="match status" value="1"/>
</dbReference>
<dbReference type="SUPFAM" id="SSF52540">
    <property type="entry name" value="P-loop containing nucleoside triphosphate hydrolases"/>
    <property type="match status" value="1"/>
</dbReference>
<dbReference type="PROSITE" id="PS01266">
    <property type="entry name" value="ADENYLOSUCCIN_SYN_1"/>
    <property type="match status" value="1"/>
</dbReference>
<dbReference type="PROSITE" id="PS00513">
    <property type="entry name" value="ADENYLOSUCCIN_SYN_2"/>
    <property type="match status" value="1"/>
</dbReference>
<evidence type="ECO:0000250" key="1">
    <source>
        <dbReference type="UniProtKB" id="A4Z6H1"/>
    </source>
</evidence>
<evidence type="ECO:0000250" key="2">
    <source>
        <dbReference type="UniProtKB" id="P46664"/>
    </source>
</evidence>
<evidence type="ECO:0000255" key="3">
    <source>
        <dbReference type="HAMAP-Rule" id="MF_03127"/>
    </source>
</evidence>
<evidence type="ECO:0000256" key="4">
    <source>
        <dbReference type="SAM" id="MobiDB-lite"/>
    </source>
</evidence>
<reference key="1">
    <citation type="submission" date="2005-04" db="EMBL/GenBank/DDBJ databases">
        <authorList>
            <consortium name="NIH - Zebrafish Gene Collection (ZGC) project"/>
        </authorList>
    </citation>
    <scope>NUCLEOTIDE SEQUENCE [LARGE SCALE MRNA]</scope>
    <source>
        <tissue>Olfactory epithelium</tissue>
    </source>
</reference>
<accession>Q568F6</accession>
<gene>
    <name type="primary">adss2</name>
    <name type="synonym">adss</name>
    <name type="ORF">zgc:110327</name>
</gene>
<sequence>MSDSGDAQPQDGGNSSSSRGKSPSVGNRVTVVLGAQWGDEGKGKVVDLLAQDADMVCRCQGGNNAGHTVVVDSVEYDFHLLPSGIINPKVTAFIGNGVVIHLPGLFEEAEKNVRKGKGLEGWESRLIISDRAHIVFDFHQAVDGVQEQERQQQAGKNLGTTKKGIGPVYSAKAARSGLRICDLLADFQEFSERFKHLASQYKSMYPSLEIDVDGELEKLKSYVDRIKPMVRDGVFFMYEALHGDPKRILVEGANAALLDIDFGTYPFVTSSNCTVGGVCTGLGMPPQNVGEVYGVVKAYTTRVGIGAFPTEQSNETGELLQTRGKEVGVTTGRKRRCGWLDLVLIKYAHMINGFTALALTKLDILDVLPEIKVGVAYKVNGETIPHFPANQEVLQKVEVEYETLPGWSTDTSAVRTFEELPENAKKYVCFIEDRLGVPVKWIGVGKSRESMIQLF</sequence>